<keyword id="KW-0133">Cell shape</keyword>
<keyword id="KW-0961">Cell wall biogenesis/degradation</keyword>
<keyword id="KW-0413">Isomerase</keyword>
<keyword id="KW-0573">Peptidoglycan synthesis</keyword>
<comment type="function">
    <text evidence="1">Provides the (R)-glutamate required for cell wall biosynthesis.</text>
</comment>
<comment type="catalytic activity">
    <reaction evidence="1">
        <text>L-glutamate = D-glutamate</text>
        <dbReference type="Rhea" id="RHEA:12813"/>
        <dbReference type="ChEBI" id="CHEBI:29985"/>
        <dbReference type="ChEBI" id="CHEBI:29986"/>
        <dbReference type="EC" id="5.1.1.3"/>
    </reaction>
</comment>
<comment type="pathway">
    <text evidence="1">Cell wall biogenesis; peptidoglycan biosynthesis.</text>
</comment>
<comment type="similarity">
    <text evidence="1">Belongs to the aspartate/glutamate racemases family.</text>
</comment>
<dbReference type="EC" id="5.1.1.3" evidence="1"/>
<dbReference type="EMBL" id="CP000964">
    <property type="protein sequence ID" value="ACI08429.1"/>
    <property type="molecule type" value="Genomic_DNA"/>
</dbReference>
<dbReference type="SMR" id="B5XZ09"/>
<dbReference type="KEGG" id="kpe:KPK_5425"/>
<dbReference type="HOGENOM" id="CLU_052344_2_0_6"/>
<dbReference type="UniPathway" id="UPA00219"/>
<dbReference type="Proteomes" id="UP000001734">
    <property type="component" value="Chromosome"/>
</dbReference>
<dbReference type="GO" id="GO:0008881">
    <property type="term" value="F:glutamate racemase activity"/>
    <property type="evidence" value="ECO:0007669"/>
    <property type="project" value="UniProtKB-UniRule"/>
</dbReference>
<dbReference type="GO" id="GO:0071555">
    <property type="term" value="P:cell wall organization"/>
    <property type="evidence" value="ECO:0007669"/>
    <property type="project" value="UniProtKB-KW"/>
</dbReference>
<dbReference type="GO" id="GO:0009252">
    <property type="term" value="P:peptidoglycan biosynthetic process"/>
    <property type="evidence" value="ECO:0007669"/>
    <property type="project" value="UniProtKB-UniRule"/>
</dbReference>
<dbReference type="GO" id="GO:0008360">
    <property type="term" value="P:regulation of cell shape"/>
    <property type="evidence" value="ECO:0007669"/>
    <property type="project" value="UniProtKB-KW"/>
</dbReference>
<dbReference type="FunFam" id="3.40.50.1860:FF:000002">
    <property type="entry name" value="Glutamate racemase"/>
    <property type="match status" value="1"/>
</dbReference>
<dbReference type="Gene3D" id="3.40.50.1860">
    <property type="match status" value="2"/>
</dbReference>
<dbReference type="HAMAP" id="MF_00258">
    <property type="entry name" value="Glu_racemase"/>
    <property type="match status" value="1"/>
</dbReference>
<dbReference type="InterPro" id="IPR015942">
    <property type="entry name" value="Asp/Glu/hydantoin_racemase"/>
</dbReference>
<dbReference type="InterPro" id="IPR001920">
    <property type="entry name" value="Asp/Glu_race"/>
</dbReference>
<dbReference type="InterPro" id="IPR018187">
    <property type="entry name" value="Asp/Glu_racemase_AS_1"/>
</dbReference>
<dbReference type="InterPro" id="IPR033134">
    <property type="entry name" value="Asp/Glu_racemase_AS_2"/>
</dbReference>
<dbReference type="InterPro" id="IPR004391">
    <property type="entry name" value="Glu_race"/>
</dbReference>
<dbReference type="NCBIfam" id="TIGR00067">
    <property type="entry name" value="glut_race"/>
    <property type="match status" value="1"/>
</dbReference>
<dbReference type="NCBIfam" id="NF002034">
    <property type="entry name" value="PRK00865.1-1"/>
    <property type="match status" value="1"/>
</dbReference>
<dbReference type="PANTHER" id="PTHR21198">
    <property type="entry name" value="GLUTAMATE RACEMASE"/>
    <property type="match status" value="1"/>
</dbReference>
<dbReference type="PANTHER" id="PTHR21198:SF2">
    <property type="entry name" value="GLUTAMATE RACEMASE"/>
    <property type="match status" value="1"/>
</dbReference>
<dbReference type="Pfam" id="PF01177">
    <property type="entry name" value="Asp_Glu_race"/>
    <property type="match status" value="1"/>
</dbReference>
<dbReference type="SUPFAM" id="SSF53681">
    <property type="entry name" value="Aspartate/glutamate racemase"/>
    <property type="match status" value="2"/>
</dbReference>
<dbReference type="PROSITE" id="PS00923">
    <property type="entry name" value="ASP_GLU_RACEMASE_1"/>
    <property type="match status" value="1"/>
</dbReference>
<dbReference type="PROSITE" id="PS00924">
    <property type="entry name" value="ASP_GLU_RACEMASE_2"/>
    <property type="match status" value="1"/>
</dbReference>
<feature type="chain" id="PRO_1000114051" description="Glutamate racemase">
    <location>
        <begin position="1"/>
        <end position="283"/>
    </location>
</feature>
<feature type="active site" description="Proton donor/acceptor" evidence="1">
    <location>
        <position position="92"/>
    </location>
</feature>
<feature type="active site" description="Proton donor/acceptor" evidence="1">
    <location>
        <position position="204"/>
    </location>
</feature>
<feature type="binding site" evidence="1">
    <location>
        <begin position="28"/>
        <end position="29"/>
    </location>
    <ligand>
        <name>substrate</name>
    </ligand>
</feature>
<feature type="binding site" evidence="1">
    <location>
        <begin position="60"/>
        <end position="61"/>
    </location>
    <ligand>
        <name>substrate</name>
    </ligand>
</feature>
<feature type="binding site" evidence="1">
    <location>
        <begin position="93"/>
        <end position="94"/>
    </location>
    <ligand>
        <name>substrate</name>
    </ligand>
</feature>
<feature type="binding site" evidence="1">
    <location>
        <begin position="205"/>
        <end position="206"/>
    </location>
    <ligand>
        <name>substrate</name>
    </ligand>
</feature>
<name>MURI_KLEP3</name>
<accession>B5XZ09</accession>
<protein>
    <recommendedName>
        <fullName evidence="1">Glutamate racemase</fullName>
        <ecNumber evidence="1">5.1.1.3</ecNumber>
    </recommendedName>
</protein>
<evidence type="ECO:0000255" key="1">
    <source>
        <dbReference type="HAMAP-Rule" id="MF_00258"/>
    </source>
</evidence>
<proteinExistence type="inferred from homology"/>
<organism>
    <name type="scientific">Klebsiella pneumoniae (strain 342)</name>
    <dbReference type="NCBI Taxonomy" id="507522"/>
    <lineage>
        <taxon>Bacteria</taxon>
        <taxon>Pseudomonadati</taxon>
        <taxon>Pseudomonadota</taxon>
        <taxon>Gammaproteobacteria</taxon>
        <taxon>Enterobacterales</taxon>
        <taxon>Enterobacteriaceae</taxon>
        <taxon>Klebsiella/Raoultella group</taxon>
        <taxon>Klebsiella</taxon>
        <taxon>Klebsiella pneumoniae complex</taxon>
    </lineage>
</organism>
<gene>
    <name evidence="1" type="primary">murI</name>
    <name type="ordered locus">KPK_5425</name>
</gene>
<sequence>MATNLQDGNTPCLAATPSDPRPTVLVFDSGVGGLSVYNEIRQLLPNLHYIYAFDNVAFPYGEKSEEFIVERVVEIVTAVQQRYPLALAVIACNTASTVSLPALREKFAFPVVGVVPAIKPAARLTANGIVGLLATRGTVKRPYTRELIDRFANECRIEMLGSAELVELAEAKLHGEPVPLEELRRILRPWLRMQEPPDTVVLGCTHFPLLQEELQRVLPEGTRLIDSGAAIARRTAWLLEHEAPDAKSSDENKAFCMALTAETEQLLPVLHRYGFPTLEKLPL</sequence>
<reference key="1">
    <citation type="journal article" date="2008" name="PLoS Genet.">
        <title>Complete genome sequence of the N2-fixing broad host range endophyte Klebsiella pneumoniae 342 and virulence predictions verified in mice.</title>
        <authorList>
            <person name="Fouts D.E."/>
            <person name="Tyler H.L."/>
            <person name="DeBoy R.T."/>
            <person name="Daugherty S."/>
            <person name="Ren Q."/>
            <person name="Badger J.H."/>
            <person name="Durkin A.S."/>
            <person name="Huot H."/>
            <person name="Shrivastava S."/>
            <person name="Kothari S."/>
            <person name="Dodson R.J."/>
            <person name="Mohamoud Y."/>
            <person name="Khouri H."/>
            <person name="Roesch L.F.W."/>
            <person name="Krogfelt K.A."/>
            <person name="Struve C."/>
            <person name="Triplett E.W."/>
            <person name="Methe B.A."/>
        </authorList>
    </citation>
    <scope>NUCLEOTIDE SEQUENCE [LARGE SCALE GENOMIC DNA]</scope>
    <source>
        <strain>342</strain>
    </source>
</reference>